<proteinExistence type="inferred from homology"/>
<sequence length="539" mass="56138">MAKTIAFDKKARRGLERGLNALADAVKVTLGPKGRNVVLEKKWGAPTITNDGVSIAKEIELEDPYEKIGAELVKEVAKKTDDVAGDGTTTATVLAQALVREGLRNVAAGANPLGLKRGIEKAVEAVTEHLLKAAKEVETKDQIAATAGISAGDPAIGELIAEAMDKVGKEGVITVEESNTFGLQLELTEGMRFDKGFISGYFATDAERQEAVLEDPYVLLVSGKISTVKDLLPLLEKVIQSGKPLAIIAEDVEGEALVTLIVNKIRGTFKSVAIKAPGFGDRRKAMLQDMAILTGGQVISEEIGLSLDTAGLEVLGQARQVVVTKDETTIVDGAGSKEQIAGRVSQIRAEIENSDSDYDREKLQERLAKLAGGVAVIKAGAATEDLKERKHRIEDAVRNAKAAVEEGIVAGGGSSLAQSGTVFDSXALEGDEATGANIVKVALDAPVKQIAVNAGLEPGVVAEKVRNSPAGTGLNAATGVYEDLLAAGINDPVKVTRSALQNAASIAALFLTTEAVVADKPEKAGAPVDPTGGMGGMDF</sequence>
<gene>
    <name evidence="1" type="primary">groEL</name>
    <name evidence="1" type="synonym">groL</name>
    <name type="synonym">hsp60</name>
</gene>
<accession>P97086</accession>
<protein>
    <recommendedName>
        <fullName evidence="1">Chaperonin GroEL</fullName>
        <ecNumber evidence="1">5.6.1.7</ecNumber>
    </recommendedName>
    <alternativeName>
        <fullName evidence="1">60 kDa chaperonin</fullName>
    </alternativeName>
    <alternativeName>
        <fullName evidence="1">Chaperonin-60</fullName>
        <shortName evidence="1">Cpn60</shortName>
    </alternativeName>
    <alternativeName>
        <fullName>Heat shock protein 60</fullName>
    </alternativeName>
</protein>
<evidence type="ECO:0000255" key="1">
    <source>
        <dbReference type="HAMAP-Rule" id="MF_00600"/>
    </source>
</evidence>
<name>CH60_TSUTY</name>
<feature type="chain" id="PRO_0000063592" description="Chaperonin GroEL">
    <location>
        <begin position="1"/>
        <end position="539"/>
    </location>
</feature>
<feature type="binding site" evidence="1">
    <location>
        <begin position="29"/>
        <end position="32"/>
    </location>
    <ligand>
        <name>ATP</name>
        <dbReference type="ChEBI" id="CHEBI:30616"/>
    </ligand>
</feature>
<feature type="binding site" evidence="1">
    <location>
        <begin position="86"/>
        <end position="90"/>
    </location>
    <ligand>
        <name>ATP</name>
        <dbReference type="ChEBI" id="CHEBI:30616"/>
    </ligand>
</feature>
<feature type="binding site" evidence="1">
    <location>
        <position position="412"/>
    </location>
    <ligand>
        <name>ATP</name>
        <dbReference type="ChEBI" id="CHEBI:30616"/>
    </ligand>
</feature>
<feature type="binding site" evidence="1">
    <location>
        <begin position="475"/>
        <end position="477"/>
    </location>
    <ligand>
        <name>ATP</name>
        <dbReference type="ChEBI" id="CHEBI:30616"/>
    </ligand>
</feature>
<feature type="binding site" evidence="1">
    <location>
        <position position="491"/>
    </location>
    <ligand>
        <name>ATP</name>
        <dbReference type="ChEBI" id="CHEBI:30616"/>
    </ligand>
</feature>
<reference key="1">
    <citation type="submission" date="1997-02" db="EMBL/GenBank/DDBJ databases">
        <title>Tsukamurella tyrosinosolvens sp. nov. hsp60 gene for heat shock protein 60.</title>
        <authorList>
            <person name="Zimmermann O."/>
            <person name="Pinkenburg O."/>
            <person name="Koechel H.G."/>
        </authorList>
    </citation>
    <scope>NUCLEOTIDE SEQUENCE [GENOMIC DNA]</scope>
    <source>
        <strain>IMMIB D-1411</strain>
    </source>
</reference>
<comment type="function">
    <text evidence="1">Together with its co-chaperonin GroES, plays an essential role in assisting protein folding. The GroEL-GroES system forms a nano-cage that allows encapsulation of the non-native substrate proteins and provides a physical environment optimized to promote and accelerate protein folding.</text>
</comment>
<comment type="catalytic activity">
    <reaction evidence="1">
        <text>ATP + H2O + a folded polypeptide = ADP + phosphate + an unfolded polypeptide.</text>
        <dbReference type="EC" id="5.6.1.7"/>
    </reaction>
</comment>
<comment type="subunit">
    <text evidence="1">Forms a cylinder of 14 subunits composed of two heptameric rings stacked back-to-back. Interacts with the co-chaperonin GroES.</text>
</comment>
<comment type="subcellular location">
    <subcellularLocation>
        <location evidence="1">Cytoplasm</location>
    </subcellularLocation>
</comment>
<comment type="similarity">
    <text evidence="1">Belongs to the chaperonin (HSP60) family.</text>
</comment>
<keyword id="KW-0067">ATP-binding</keyword>
<keyword id="KW-0143">Chaperone</keyword>
<keyword id="KW-0963">Cytoplasm</keyword>
<keyword id="KW-0413">Isomerase</keyword>
<keyword id="KW-0547">Nucleotide-binding</keyword>
<dbReference type="EC" id="5.6.1.7" evidence="1"/>
<dbReference type="EMBL" id="U90204">
    <property type="protein sequence ID" value="AAB49990.1"/>
    <property type="molecule type" value="Genomic_DNA"/>
</dbReference>
<dbReference type="STRING" id="57704.SAMN04489793_4929"/>
<dbReference type="GO" id="GO:0005737">
    <property type="term" value="C:cytoplasm"/>
    <property type="evidence" value="ECO:0007669"/>
    <property type="project" value="UniProtKB-SubCell"/>
</dbReference>
<dbReference type="GO" id="GO:0005524">
    <property type="term" value="F:ATP binding"/>
    <property type="evidence" value="ECO:0007669"/>
    <property type="project" value="UniProtKB-UniRule"/>
</dbReference>
<dbReference type="GO" id="GO:0140662">
    <property type="term" value="F:ATP-dependent protein folding chaperone"/>
    <property type="evidence" value="ECO:0007669"/>
    <property type="project" value="InterPro"/>
</dbReference>
<dbReference type="GO" id="GO:0016853">
    <property type="term" value="F:isomerase activity"/>
    <property type="evidence" value="ECO:0007669"/>
    <property type="project" value="UniProtKB-KW"/>
</dbReference>
<dbReference type="GO" id="GO:0051082">
    <property type="term" value="F:unfolded protein binding"/>
    <property type="evidence" value="ECO:0007669"/>
    <property type="project" value="UniProtKB-UniRule"/>
</dbReference>
<dbReference type="GO" id="GO:0042026">
    <property type="term" value="P:protein refolding"/>
    <property type="evidence" value="ECO:0007669"/>
    <property type="project" value="UniProtKB-UniRule"/>
</dbReference>
<dbReference type="CDD" id="cd03344">
    <property type="entry name" value="GroEL"/>
    <property type="match status" value="1"/>
</dbReference>
<dbReference type="FunFam" id="3.50.7.10:FF:000001">
    <property type="entry name" value="60 kDa chaperonin"/>
    <property type="match status" value="1"/>
</dbReference>
<dbReference type="Gene3D" id="3.50.7.10">
    <property type="entry name" value="GroEL"/>
    <property type="match status" value="1"/>
</dbReference>
<dbReference type="Gene3D" id="1.10.560.10">
    <property type="entry name" value="GroEL-like equatorial domain"/>
    <property type="match status" value="1"/>
</dbReference>
<dbReference type="Gene3D" id="3.30.260.10">
    <property type="entry name" value="TCP-1-like chaperonin intermediate domain"/>
    <property type="match status" value="1"/>
</dbReference>
<dbReference type="HAMAP" id="MF_00600">
    <property type="entry name" value="CH60"/>
    <property type="match status" value="1"/>
</dbReference>
<dbReference type="InterPro" id="IPR018370">
    <property type="entry name" value="Chaperonin_Cpn60_CS"/>
</dbReference>
<dbReference type="InterPro" id="IPR001844">
    <property type="entry name" value="Cpn60/GroEL"/>
</dbReference>
<dbReference type="InterPro" id="IPR002423">
    <property type="entry name" value="Cpn60/GroEL/TCP-1"/>
</dbReference>
<dbReference type="InterPro" id="IPR027409">
    <property type="entry name" value="GroEL-like_apical_dom_sf"/>
</dbReference>
<dbReference type="InterPro" id="IPR027413">
    <property type="entry name" value="GROEL-like_equatorial_sf"/>
</dbReference>
<dbReference type="InterPro" id="IPR027410">
    <property type="entry name" value="TCP-1-like_intermed_sf"/>
</dbReference>
<dbReference type="NCBIfam" id="TIGR02348">
    <property type="entry name" value="GroEL"/>
    <property type="match status" value="1"/>
</dbReference>
<dbReference type="NCBIfam" id="NF000592">
    <property type="entry name" value="PRK00013.1"/>
    <property type="match status" value="1"/>
</dbReference>
<dbReference type="NCBIfam" id="NF009487">
    <property type="entry name" value="PRK12849.1"/>
    <property type="match status" value="1"/>
</dbReference>
<dbReference type="NCBIfam" id="NF009488">
    <property type="entry name" value="PRK12850.1"/>
    <property type="match status" value="1"/>
</dbReference>
<dbReference type="NCBIfam" id="NF009489">
    <property type="entry name" value="PRK12851.1"/>
    <property type="match status" value="1"/>
</dbReference>
<dbReference type="PANTHER" id="PTHR45633">
    <property type="entry name" value="60 KDA HEAT SHOCK PROTEIN, MITOCHONDRIAL"/>
    <property type="match status" value="1"/>
</dbReference>
<dbReference type="Pfam" id="PF00118">
    <property type="entry name" value="Cpn60_TCP1"/>
    <property type="match status" value="1"/>
</dbReference>
<dbReference type="PRINTS" id="PR00298">
    <property type="entry name" value="CHAPERONIN60"/>
</dbReference>
<dbReference type="SUPFAM" id="SSF52029">
    <property type="entry name" value="GroEL apical domain-like"/>
    <property type="match status" value="1"/>
</dbReference>
<dbReference type="SUPFAM" id="SSF48592">
    <property type="entry name" value="GroEL equatorial domain-like"/>
    <property type="match status" value="1"/>
</dbReference>
<dbReference type="SUPFAM" id="SSF54849">
    <property type="entry name" value="GroEL-intermediate domain like"/>
    <property type="match status" value="1"/>
</dbReference>
<dbReference type="PROSITE" id="PS00296">
    <property type="entry name" value="CHAPERONINS_CPN60"/>
    <property type="match status" value="1"/>
</dbReference>
<organism>
    <name type="scientific">Tsukamurella tyrosinosolvens</name>
    <dbReference type="NCBI Taxonomy" id="57704"/>
    <lineage>
        <taxon>Bacteria</taxon>
        <taxon>Bacillati</taxon>
        <taxon>Actinomycetota</taxon>
        <taxon>Actinomycetes</taxon>
        <taxon>Mycobacteriales</taxon>
        <taxon>Tsukamurellaceae</taxon>
        <taxon>Tsukamurella</taxon>
    </lineage>
</organism>